<reference key="1">
    <citation type="journal article" date="2002" name="Nucleic Acids Res.">
        <title>Genome sequence of Shigella flexneri 2a: insights into pathogenicity through comparison with genomes of Escherichia coli K12 and O157.</title>
        <authorList>
            <person name="Jin Q."/>
            <person name="Yuan Z."/>
            <person name="Xu J."/>
            <person name="Wang Y."/>
            <person name="Shen Y."/>
            <person name="Lu W."/>
            <person name="Wang J."/>
            <person name="Liu H."/>
            <person name="Yang J."/>
            <person name="Yang F."/>
            <person name="Zhang X."/>
            <person name="Zhang J."/>
            <person name="Yang G."/>
            <person name="Wu H."/>
            <person name="Qu D."/>
            <person name="Dong J."/>
            <person name="Sun L."/>
            <person name="Xue Y."/>
            <person name="Zhao A."/>
            <person name="Gao Y."/>
            <person name="Zhu J."/>
            <person name="Kan B."/>
            <person name="Ding K."/>
            <person name="Chen S."/>
            <person name="Cheng H."/>
            <person name="Yao Z."/>
            <person name="He B."/>
            <person name="Chen R."/>
            <person name="Ma D."/>
            <person name="Qiang B."/>
            <person name="Wen Y."/>
            <person name="Hou Y."/>
            <person name="Yu J."/>
        </authorList>
    </citation>
    <scope>NUCLEOTIDE SEQUENCE [LARGE SCALE GENOMIC DNA]</scope>
    <source>
        <strain>301 / Serotype 2a</strain>
    </source>
</reference>
<reference key="2">
    <citation type="journal article" date="2003" name="Infect. Immun.">
        <title>Complete genome sequence and comparative genomics of Shigella flexneri serotype 2a strain 2457T.</title>
        <authorList>
            <person name="Wei J."/>
            <person name="Goldberg M.B."/>
            <person name="Burland V."/>
            <person name="Venkatesan M.M."/>
            <person name="Deng W."/>
            <person name="Fournier G."/>
            <person name="Mayhew G.F."/>
            <person name="Plunkett G. III"/>
            <person name="Rose D.J."/>
            <person name="Darling A."/>
            <person name="Mau B."/>
            <person name="Perna N.T."/>
            <person name="Payne S.M."/>
            <person name="Runyen-Janecky L.J."/>
            <person name="Zhou S."/>
            <person name="Schwartz D.C."/>
            <person name="Blattner F.R."/>
        </authorList>
    </citation>
    <scope>NUCLEOTIDE SEQUENCE [LARGE SCALE GENOMIC DNA]</scope>
    <source>
        <strain>ATCC 700930 / 2457T / Serotype 2a</strain>
    </source>
</reference>
<dbReference type="EMBL" id="AE005674">
    <property type="protein sequence ID" value="AAN44811.1"/>
    <property type="molecule type" value="Genomic_DNA"/>
</dbReference>
<dbReference type="EMBL" id="AE014073">
    <property type="protein sequence ID" value="AAP19365.1"/>
    <property type="molecule type" value="Genomic_DNA"/>
</dbReference>
<dbReference type="RefSeq" id="NP_709104.1">
    <property type="nucleotide sequence ID" value="NC_004337.2"/>
</dbReference>
<dbReference type="RefSeq" id="WP_001138117.1">
    <property type="nucleotide sequence ID" value="NZ_WPGW01000088.1"/>
</dbReference>
<dbReference type="SMR" id="P0A7U6"/>
<dbReference type="STRING" id="198214.SF3348"/>
<dbReference type="PaxDb" id="198214-SF3348"/>
<dbReference type="GeneID" id="1027008"/>
<dbReference type="GeneID" id="98390438"/>
<dbReference type="KEGG" id="sfl:SF3348"/>
<dbReference type="KEGG" id="sfx:S4414"/>
<dbReference type="PATRIC" id="fig|198214.7.peg.3957"/>
<dbReference type="HOGENOM" id="CLU_144911_0_1_6"/>
<dbReference type="Proteomes" id="UP000001006">
    <property type="component" value="Chromosome"/>
</dbReference>
<dbReference type="Proteomes" id="UP000002673">
    <property type="component" value="Chromosome"/>
</dbReference>
<dbReference type="GO" id="GO:0005737">
    <property type="term" value="C:cytoplasm"/>
    <property type="evidence" value="ECO:0007669"/>
    <property type="project" value="UniProtKB-ARBA"/>
</dbReference>
<dbReference type="GO" id="GO:0015935">
    <property type="term" value="C:small ribosomal subunit"/>
    <property type="evidence" value="ECO:0007669"/>
    <property type="project" value="InterPro"/>
</dbReference>
<dbReference type="GO" id="GO:0019843">
    <property type="term" value="F:rRNA binding"/>
    <property type="evidence" value="ECO:0007669"/>
    <property type="project" value="UniProtKB-UniRule"/>
</dbReference>
<dbReference type="GO" id="GO:0003735">
    <property type="term" value="F:structural constituent of ribosome"/>
    <property type="evidence" value="ECO:0007669"/>
    <property type="project" value="InterPro"/>
</dbReference>
<dbReference type="GO" id="GO:0000049">
    <property type="term" value="F:tRNA binding"/>
    <property type="evidence" value="ECO:0007669"/>
    <property type="project" value="UniProtKB-KW"/>
</dbReference>
<dbReference type="GO" id="GO:0000028">
    <property type="term" value="P:ribosomal small subunit assembly"/>
    <property type="evidence" value="ECO:0007669"/>
    <property type="project" value="TreeGrafter"/>
</dbReference>
<dbReference type="GO" id="GO:0006412">
    <property type="term" value="P:translation"/>
    <property type="evidence" value="ECO:0007669"/>
    <property type="project" value="UniProtKB-UniRule"/>
</dbReference>
<dbReference type="FunFam" id="3.30.860.10:FF:000001">
    <property type="entry name" value="30S ribosomal protein S19"/>
    <property type="match status" value="1"/>
</dbReference>
<dbReference type="Gene3D" id="3.30.860.10">
    <property type="entry name" value="30s Ribosomal Protein S19, Chain A"/>
    <property type="match status" value="1"/>
</dbReference>
<dbReference type="HAMAP" id="MF_00531">
    <property type="entry name" value="Ribosomal_uS19"/>
    <property type="match status" value="1"/>
</dbReference>
<dbReference type="InterPro" id="IPR002222">
    <property type="entry name" value="Ribosomal_uS19"/>
</dbReference>
<dbReference type="InterPro" id="IPR005732">
    <property type="entry name" value="Ribosomal_uS19_bac-type"/>
</dbReference>
<dbReference type="InterPro" id="IPR020934">
    <property type="entry name" value="Ribosomal_uS19_CS"/>
</dbReference>
<dbReference type="InterPro" id="IPR023575">
    <property type="entry name" value="Ribosomal_uS19_SF"/>
</dbReference>
<dbReference type="NCBIfam" id="TIGR01050">
    <property type="entry name" value="rpsS_bact"/>
    <property type="match status" value="1"/>
</dbReference>
<dbReference type="PANTHER" id="PTHR11880">
    <property type="entry name" value="RIBOSOMAL PROTEIN S19P FAMILY MEMBER"/>
    <property type="match status" value="1"/>
</dbReference>
<dbReference type="PANTHER" id="PTHR11880:SF8">
    <property type="entry name" value="SMALL RIBOSOMAL SUBUNIT PROTEIN US19M"/>
    <property type="match status" value="1"/>
</dbReference>
<dbReference type="Pfam" id="PF00203">
    <property type="entry name" value="Ribosomal_S19"/>
    <property type="match status" value="1"/>
</dbReference>
<dbReference type="PIRSF" id="PIRSF002144">
    <property type="entry name" value="Ribosomal_S19"/>
    <property type="match status" value="1"/>
</dbReference>
<dbReference type="PRINTS" id="PR00975">
    <property type="entry name" value="RIBOSOMALS19"/>
</dbReference>
<dbReference type="SUPFAM" id="SSF54570">
    <property type="entry name" value="Ribosomal protein S19"/>
    <property type="match status" value="1"/>
</dbReference>
<dbReference type="PROSITE" id="PS00323">
    <property type="entry name" value="RIBOSOMAL_S19"/>
    <property type="match status" value="1"/>
</dbReference>
<protein>
    <recommendedName>
        <fullName evidence="2">Small ribosomal subunit protein uS19</fullName>
    </recommendedName>
    <alternativeName>
        <fullName>30S ribosomal protein S19</fullName>
    </alternativeName>
</protein>
<accession>P0A7U6</accession>
<accession>P02375</accession>
<keyword id="KW-1185">Reference proteome</keyword>
<keyword id="KW-0687">Ribonucleoprotein</keyword>
<keyword id="KW-0689">Ribosomal protein</keyword>
<keyword id="KW-0694">RNA-binding</keyword>
<keyword id="KW-0699">rRNA-binding</keyword>
<keyword id="KW-0820">tRNA-binding</keyword>
<organism>
    <name type="scientific">Shigella flexneri</name>
    <dbReference type="NCBI Taxonomy" id="623"/>
    <lineage>
        <taxon>Bacteria</taxon>
        <taxon>Pseudomonadati</taxon>
        <taxon>Pseudomonadota</taxon>
        <taxon>Gammaproteobacteria</taxon>
        <taxon>Enterobacterales</taxon>
        <taxon>Enterobacteriaceae</taxon>
        <taxon>Shigella</taxon>
    </lineage>
</organism>
<comment type="function">
    <text evidence="1">Protein S19 forms a complex with S13 that binds strongly to the 16S ribosomal RNA.</text>
</comment>
<comment type="similarity">
    <text evidence="2">Belongs to the universal ribosomal protein uS19 family.</text>
</comment>
<name>RS19_SHIFL</name>
<proteinExistence type="inferred from homology"/>
<feature type="initiator methionine" description="Removed" evidence="1">
    <location>
        <position position="1"/>
    </location>
</feature>
<feature type="chain" id="PRO_0000129897" description="Small ribosomal subunit protein uS19">
    <location>
        <begin position="2"/>
        <end position="92"/>
    </location>
</feature>
<evidence type="ECO:0000250" key="1"/>
<evidence type="ECO:0000305" key="2"/>
<gene>
    <name type="primary">rpsS</name>
    <name type="ordered locus">SF3348</name>
    <name type="ordered locus">S4414</name>
</gene>
<sequence length="92" mass="10430">MPRSLKKGPFIDLHLLKKVEKAVESGDKKPLRTWSRRSTIFPNMIGLTIAVHNGRQHVPVFVTDEMVGHKLGEFAPTRTYRGHAADKKAKKK</sequence>